<dbReference type="EC" id="1.1.99.1" evidence="1"/>
<dbReference type="EC" id="1.2.1.8" evidence="1"/>
<dbReference type="EMBL" id="AM181176">
    <property type="protein sequence ID" value="CAY53023.1"/>
    <property type="molecule type" value="Genomic_DNA"/>
</dbReference>
<dbReference type="RefSeq" id="WP_015886276.1">
    <property type="nucleotide sequence ID" value="NC_012660.1"/>
</dbReference>
<dbReference type="SMR" id="C3K3D3"/>
<dbReference type="GeneID" id="93467318"/>
<dbReference type="PATRIC" id="fig|216595.4.peg.5809"/>
<dbReference type="eggNOG" id="COG2303">
    <property type="taxonomic scope" value="Bacteria"/>
</dbReference>
<dbReference type="HOGENOM" id="CLU_002865_7_1_6"/>
<dbReference type="OrthoDB" id="9785276at2"/>
<dbReference type="UniPathway" id="UPA00529">
    <property type="reaction ID" value="UER00385"/>
</dbReference>
<dbReference type="GO" id="GO:0016020">
    <property type="term" value="C:membrane"/>
    <property type="evidence" value="ECO:0007669"/>
    <property type="project" value="TreeGrafter"/>
</dbReference>
<dbReference type="GO" id="GO:0008802">
    <property type="term" value="F:betaine-aldehyde dehydrogenase (NAD+) activity"/>
    <property type="evidence" value="ECO:0007669"/>
    <property type="project" value="UniProtKB-EC"/>
</dbReference>
<dbReference type="GO" id="GO:0008812">
    <property type="term" value="F:choline dehydrogenase activity"/>
    <property type="evidence" value="ECO:0007669"/>
    <property type="project" value="UniProtKB-UniRule"/>
</dbReference>
<dbReference type="GO" id="GO:0050660">
    <property type="term" value="F:flavin adenine dinucleotide binding"/>
    <property type="evidence" value="ECO:0007669"/>
    <property type="project" value="InterPro"/>
</dbReference>
<dbReference type="GO" id="GO:0019285">
    <property type="term" value="P:glycine betaine biosynthetic process from choline"/>
    <property type="evidence" value="ECO:0007669"/>
    <property type="project" value="UniProtKB-UniRule"/>
</dbReference>
<dbReference type="Gene3D" id="3.50.50.60">
    <property type="entry name" value="FAD/NAD(P)-binding domain"/>
    <property type="match status" value="1"/>
</dbReference>
<dbReference type="Gene3D" id="3.30.560.10">
    <property type="entry name" value="Glucose Oxidase, domain 3"/>
    <property type="match status" value="1"/>
</dbReference>
<dbReference type="HAMAP" id="MF_00750">
    <property type="entry name" value="Choline_dehydrogen"/>
    <property type="match status" value="1"/>
</dbReference>
<dbReference type="InterPro" id="IPR011533">
    <property type="entry name" value="BetA"/>
</dbReference>
<dbReference type="InterPro" id="IPR036188">
    <property type="entry name" value="FAD/NAD-bd_sf"/>
</dbReference>
<dbReference type="InterPro" id="IPR012132">
    <property type="entry name" value="GMC_OxRdtase"/>
</dbReference>
<dbReference type="InterPro" id="IPR000172">
    <property type="entry name" value="GMC_OxRdtase_N"/>
</dbReference>
<dbReference type="InterPro" id="IPR007867">
    <property type="entry name" value="GMC_OxRtase_C"/>
</dbReference>
<dbReference type="NCBIfam" id="TIGR01810">
    <property type="entry name" value="betA"/>
    <property type="match status" value="1"/>
</dbReference>
<dbReference type="NCBIfam" id="NF002550">
    <property type="entry name" value="PRK02106.1"/>
    <property type="match status" value="1"/>
</dbReference>
<dbReference type="PANTHER" id="PTHR11552:SF147">
    <property type="entry name" value="CHOLINE DEHYDROGENASE, MITOCHONDRIAL"/>
    <property type="match status" value="1"/>
</dbReference>
<dbReference type="PANTHER" id="PTHR11552">
    <property type="entry name" value="GLUCOSE-METHANOL-CHOLINE GMC OXIDOREDUCTASE"/>
    <property type="match status" value="1"/>
</dbReference>
<dbReference type="Pfam" id="PF05199">
    <property type="entry name" value="GMC_oxred_C"/>
    <property type="match status" value="1"/>
</dbReference>
<dbReference type="Pfam" id="PF00732">
    <property type="entry name" value="GMC_oxred_N"/>
    <property type="match status" value="1"/>
</dbReference>
<dbReference type="PIRSF" id="PIRSF000137">
    <property type="entry name" value="Alcohol_oxidase"/>
    <property type="match status" value="1"/>
</dbReference>
<dbReference type="SUPFAM" id="SSF54373">
    <property type="entry name" value="FAD-linked reductases, C-terminal domain"/>
    <property type="match status" value="1"/>
</dbReference>
<dbReference type="SUPFAM" id="SSF51905">
    <property type="entry name" value="FAD/NAD(P)-binding domain"/>
    <property type="match status" value="1"/>
</dbReference>
<dbReference type="PROSITE" id="PS00623">
    <property type="entry name" value="GMC_OXRED_1"/>
    <property type="match status" value="1"/>
</dbReference>
<dbReference type="PROSITE" id="PS00624">
    <property type="entry name" value="GMC_OXRED_2"/>
    <property type="match status" value="1"/>
</dbReference>
<comment type="function">
    <text evidence="1">Involved in the biosynthesis of the osmoprotectant glycine betaine. Catalyzes the oxidation of choline to betaine aldehyde and betaine aldehyde to glycine betaine at the same rate.</text>
</comment>
<comment type="catalytic activity">
    <reaction evidence="1">
        <text>choline + A = betaine aldehyde + AH2</text>
        <dbReference type="Rhea" id="RHEA:17433"/>
        <dbReference type="ChEBI" id="CHEBI:13193"/>
        <dbReference type="ChEBI" id="CHEBI:15354"/>
        <dbReference type="ChEBI" id="CHEBI:15710"/>
        <dbReference type="ChEBI" id="CHEBI:17499"/>
        <dbReference type="EC" id="1.1.99.1"/>
    </reaction>
</comment>
<comment type="catalytic activity">
    <reaction evidence="1">
        <text>betaine aldehyde + NAD(+) + H2O = glycine betaine + NADH + 2 H(+)</text>
        <dbReference type="Rhea" id="RHEA:15305"/>
        <dbReference type="ChEBI" id="CHEBI:15377"/>
        <dbReference type="ChEBI" id="CHEBI:15378"/>
        <dbReference type="ChEBI" id="CHEBI:15710"/>
        <dbReference type="ChEBI" id="CHEBI:17750"/>
        <dbReference type="ChEBI" id="CHEBI:57540"/>
        <dbReference type="ChEBI" id="CHEBI:57945"/>
        <dbReference type="EC" id="1.2.1.8"/>
    </reaction>
</comment>
<comment type="cofactor">
    <cofactor evidence="1">
        <name>FAD</name>
        <dbReference type="ChEBI" id="CHEBI:57692"/>
    </cofactor>
</comment>
<comment type="pathway">
    <text evidence="1">Amine and polyamine biosynthesis; betaine biosynthesis via choline pathway; betaine aldehyde from choline (cytochrome c reductase route): step 1/1.</text>
</comment>
<comment type="similarity">
    <text evidence="1">Belongs to the GMC oxidoreductase family.</text>
</comment>
<keyword id="KW-0274">FAD</keyword>
<keyword id="KW-0285">Flavoprotein</keyword>
<keyword id="KW-0520">NAD</keyword>
<keyword id="KW-0560">Oxidoreductase</keyword>
<evidence type="ECO:0000255" key="1">
    <source>
        <dbReference type="HAMAP-Rule" id="MF_00750"/>
    </source>
</evidence>
<accession>C3K3D3</accession>
<proteinExistence type="inferred from homology"/>
<gene>
    <name evidence="1" type="primary">betA</name>
    <name type="ordered locus">PFLU_5686</name>
</gene>
<reference key="1">
    <citation type="journal article" date="2009" name="Genome Biol.">
        <title>Genomic and genetic analyses of diversity and plant interactions of Pseudomonas fluorescens.</title>
        <authorList>
            <person name="Silby M.W."/>
            <person name="Cerdeno-Tarraga A.M."/>
            <person name="Vernikos G.S."/>
            <person name="Giddens S.R."/>
            <person name="Jackson R.W."/>
            <person name="Preston G.M."/>
            <person name="Zhang X.-X."/>
            <person name="Moon C.D."/>
            <person name="Gehrig S.M."/>
            <person name="Godfrey S.A.C."/>
            <person name="Knight C.G."/>
            <person name="Malone J.G."/>
            <person name="Robinson Z."/>
            <person name="Spiers A.J."/>
            <person name="Harris S."/>
            <person name="Challis G.L."/>
            <person name="Yaxley A.M."/>
            <person name="Harris D."/>
            <person name="Seeger K."/>
            <person name="Murphy L."/>
            <person name="Rutter S."/>
            <person name="Squares R."/>
            <person name="Quail M.A."/>
            <person name="Saunders E."/>
            <person name="Mavromatis K."/>
            <person name="Brettin T.S."/>
            <person name="Bentley S.D."/>
            <person name="Hothersall J."/>
            <person name="Stephens E."/>
            <person name="Thomas C.M."/>
            <person name="Parkhill J."/>
            <person name="Levy S.B."/>
            <person name="Rainey P.B."/>
            <person name="Thomson N.R."/>
        </authorList>
    </citation>
    <scope>NUCLEOTIDE SEQUENCE [LARGE SCALE GENOMIC DNA]</scope>
    <source>
        <strain>SBW25</strain>
    </source>
</reference>
<feature type="chain" id="PRO_1000212848" description="Oxygen-dependent choline dehydrogenase">
    <location>
        <begin position="1"/>
        <end position="567"/>
    </location>
</feature>
<feature type="active site" description="Proton acceptor" evidence="1">
    <location>
        <position position="475"/>
    </location>
</feature>
<feature type="binding site" evidence="1">
    <location>
        <begin position="6"/>
        <end position="35"/>
    </location>
    <ligand>
        <name>FAD</name>
        <dbReference type="ChEBI" id="CHEBI:57692"/>
    </ligand>
</feature>
<protein>
    <recommendedName>
        <fullName evidence="1">Oxygen-dependent choline dehydrogenase</fullName>
        <shortName evidence="1">CDH</shortName>
        <shortName evidence="1">CHD</shortName>
        <ecNumber evidence="1">1.1.99.1</ecNumber>
    </recommendedName>
    <alternativeName>
        <fullName evidence="1">Betaine aldehyde dehydrogenase</fullName>
        <shortName evidence="1">BADH</shortName>
        <ecNumber evidence="1">1.2.1.8</ecNumber>
    </alternativeName>
</protein>
<organism>
    <name type="scientific">Pseudomonas fluorescens (strain SBW25)</name>
    <dbReference type="NCBI Taxonomy" id="216595"/>
    <lineage>
        <taxon>Bacteria</taxon>
        <taxon>Pseudomonadati</taxon>
        <taxon>Pseudomonadota</taxon>
        <taxon>Gammaproteobacteria</taxon>
        <taxon>Pseudomonadales</taxon>
        <taxon>Pseudomonadaceae</taxon>
        <taxon>Pseudomonas</taxon>
    </lineage>
</organism>
<sequence length="567" mass="62682">MSQEYDYIIVGAGSAGNTLATRLTEDEGVTVLLLEAGGPDYRLDFRTQMPAALAFPLQGRRYNWAYETDPEPHMDGRRMECGRGKGLGGSSLINGMCYIRGNAMDYDNWAKLPGLENWTYLDCLPYFRKAETRDIGPNDYHGGEGPVSVTTPKAGNNPLFHAMVEAGVQAGYPRTDDLNGYQQEGFGPMDRTVTKNGRRASTARGYLDTAKKRSTLTIVTHALTDKVLFEGKRAVGVRYLIGAAEERVEARARKEVLVCSGAIASPQLLQRSGVGPAKLLESLDIPVVHDLPGVGENLQDHLELYLQYACTQPVSLYPSLLWYNQPAIGAEWLFNGTGIGASNQFEAGGFIRSRPEFDWPNIQYHFLPVAINYNGSNGVKEHGFQAHMGSMRSPSRGRVQLKSKNPRDYPSILFNYMATEQDWQEFRDGIRLTREIMQQPALDPYRGREISPGIDVQTDEQLDKFIREHAETAFHPSCSCKMGTDEMAVVDGEGRVHGMQGLRVVDASIMPIITTGNLNAPTIMIAEKIADKIRGRQPLPRSTADYYVAGDAPVRGKPLREVGPTAQ</sequence>
<name>BETA_PSEFS</name>